<keyword id="KW-0963">Cytoplasm</keyword>
<keyword id="KW-0664">Pyridoxine biosynthesis</keyword>
<keyword id="KW-0808">Transferase</keyword>
<reference key="1">
    <citation type="journal article" date="2010" name="J. Bacteriol.">
        <title>Whole genome sequences of two Xylella fastidiosa strains (M12 and M23) causing almond leaf scorch disease in California.</title>
        <authorList>
            <person name="Chen J."/>
            <person name="Xie G."/>
            <person name="Han S."/>
            <person name="Chertkov O."/>
            <person name="Sims D."/>
            <person name="Civerolo E.L."/>
        </authorList>
    </citation>
    <scope>NUCLEOTIDE SEQUENCE [LARGE SCALE GENOMIC DNA]</scope>
    <source>
        <strain>M12</strain>
    </source>
</reference>
<comment type="function">
    <text evidence="1">Catalyzes the complicated ring closure reaction between the two acyclic compounds 1-deoxy-D-xylulose-5-phosphate (DXP) and 3-amino-2-oxopropyl phosphate (1-amino-acetone-3-phosphate or AAP) to form pyridoxine 5'-phosphate (PNP) and inorganic phosphate.</text>
</comment>
<comment type="catalytic activity">
    <reaction evidence="1">
        <text>3-amino-2-oxopropyl phosphate + 1-deoxy-D-xylulose 5-phosphate = pyridoxine 5'-phosphate + phosphate + 2 H2O + H(+)</text>
        <dbReference type="Rhea" id="RHEA:15265"/>
        <dbReference type="ChEBI" id="CHEBI:15377"/>
        <dbReference type="ChEBI" id="CHEBI:15378"/>
        <dbReference type="ChEBI" id="CHEBI:43474"/>
        <dbReference type="ChEBI" id="CHEBI:57279"/>
        <dbReference type="ChEBI" id="CHEBI:57792"/>
        <dbReference type="ChEBI" id="CHEBI:58589"/>
        <dbReference type="EC" id="2.6.99.2"/>
    </reaction>
</comment>
<comment type="pathway">
    <text evidence="1">Cofactor biosynthesis; pyridoxine 5'-phosphate biosynthesis; pyridoxine 5'-phosphate from D-erythrose 4-phosphate: step 5/5.</text>
</comment>
<comment type="subunit">
    <text evidence="1">Homooctamer; tetramer of dimers.</text>
</comment>
<comment type="subcellular location">
    <subcellularLocation>
        <location evidence="1">Cytoplasm</location>
    </subcellularLocation>
</comment>
<comment type="similarity">
    <text evidence="1">Belongs to the PNP synthase family.</text>
</comment>
<organism>
    <name type="scientific">Xylella fastidiosa (strain M12)</name>
    <dbReference type="NCBI Taxonomy" id="405440"/>
    <lineage>
        <taxon>Bacteria</taxon>
        <taxon>Pseudomonadati</taxon>
        <taxon>Pseudomonadota</taxon>
        <taxon>Gammaproteobacteria</taxon>
        <taxon>Lysobacterales</taxon>
        <taxon>Lysobacteraceae</taxon>
        <taxon>Xylella</taxon>
    </lineage>
</organism>
<feature type="chain" id="PRO_1000114834" description="Pyridoxine 5'-phosphate synthase">
    <location>
        <begin position="1"/>
        <end position="260"/>
    </location>
</feature>
<feature type="active site" description="Proton acceptor" evidence="1">
    <location>
        <position position="46"/>
    </location>
</feature>
<feature type="active site" description="Proton acceptor" evidence="1">
    <location>
        <position position="76"/>
    </location>
</feature>
<feature type="active site" description="Proton donor" evidence="1">
    <location>
        <position position="204"/>
    </location>
</feature>
<feature type="binding site" evidence="1">
    <location>
        <position position="10"/>
    </location>
    <ligand>
        <name>3-amino-2-oxopropyl phosphate</name>
        <dbReference type="ChEBI" id="CHEBI:57279"/>
    </ligand>
</feature>
<feature type="binding site" evidence="1">
    <location>
        <position position="21"/>
    </location>
    <ligand>
        <name>3-amino-2-oxopropyl phosphate</name>
        <dbReference type="ChEBI" id="CHEBI:57279"/>
    </ligand>
</feature>
<feature type="binding site" evidence="1">
    <location>
        <position position="48"/>
    </location>
    <ligand>
        <name>1-deoxy-D-xylulose 5-phosphate</name>
        <dbReference type="ChEBI" id="CHEBI:57792"/>
    </ligand>
</feature>
<feature type="binding site" evidence="1">
    <location>
        <position position="53"/>
    </location>
    <ligand>
        <name>1-deoxy-D-xylulose 5-phosphate</name>
        <dbReference type="ChEBI" id="CHEBI:57792"/>
    </ligand>
</feature>
<feature type="binding site" evidence="1">
    <location>
        <position position="113"/>
    </location>
    <ligand>
        <name>1-deoxy-D-xylulose 5-phosphate</name>
        <dbReference type="ChEBI" id="CHEBI:57792"/>
    </ligand>
</feature>
<feature type="binding site" evidence="1">
    <location>
        <position position="205"/>
    </location>
    <ligand>
        <name>3-amino-2-oxopropyl phosphate</name>
        <dbReference type="ChEBI" id="CHEBI:57279"/>
    </ligand>
</feature>
<feature type="binding site" evidence="1">
    <location>
        <begin position="227"/>
        <end position="228"/>
    </location>
    <ligand>
        <name>3-amino-2-oxopropyl phosphate</name>
        <dbReference type="ChEBI" id="CHEBI:57279"/>
    </ligand>
</feature>
<feature type="site" description="Transition state stabilizer" evidence="1">
    <location>
        <position position="164"/>
    </location>
</feature>
<accession>B0U2A9</accession>
<protein>
    <recommendedName>
        <fullName evidence="1">Pyridoxine 5'-phosphate synthase</fullName>
        <shortName evidence="1">PNP synthase</shortName>
        <ecNumber evidence="1">2.6.99.2</ecNumber>
    </recommendedName>
</protein>
<proteinExistence type="inferred from homology"/>
<sequence length="260" mass="28080">MSQRTRLSVNVNKIAVLRNSRGHGAPDVIRAASACIDAGAHGITVHPRPDARHIRHDDVIGLSTLTRARGVEFNIEGNPFAEPRAGYCGLLALCRETRPHQVTLVPDGDQQITSDHGFDFAREGPGLRPLIDEIKQWGCRVSLFVDVNVTGLADAAIWGVDRIELYTGPYAEMHHAGCSDAVLREFATTARLAQDVGLGVNAGHDLSQTNLGVFLGAVPDVLEVSIGHALISEALYEGLIPTVRRYLDILDSVNPAVSMR</sequence>
<dbReference type="EC" id="2.6.99.2" evidence="1"/>
<dbReference type="EMBL" id="CP000941">
    <property type="protein sequence ID" value="ACA11094.1"/>
    <property type="molecule type" value="Genomic_DNA"/>
</dbReference>
<dbReference type="RefSeq" id="WP_004085059.1">
    <property type="nucleotide sequence ID" value="NC_010513.1"/>
</dbReference>
<dbReference type="SMR" id="B0U2A9"/>
<dbReference type="KEGG" id="xfm:Xfasm12_0046"/>
<dbReference type="HOGENOM" id="CLU_074563_1_0_6"/>
<dbReference type="UniPathway" id="UPA00244">
    <property type="reaction ID" value="UER00313"/>
</dbReference>
<dbReference type="GO" id="GO:0005829">
    <property type="term" value="C:cytosol"/>
    <property type="evidence" value="ECO:0007669"/>
    <property type="project" value="TreeGrafter"/>
</dbReference>
<dbReference type="GO" id="GO:0033856">
    <property type="term" value="F:pyridoxine 5'-phosphate synthase activity"/>
    <property type="evidence" value="ECO:0007669"/>
    <property type="project" value="UniProtKB-EC"/>
</dbReference>
<dbReference type="GO" id="GO:0008615">
    <property type="term" value="P:pyridoxine biosynthetic process"/>
    <property type="evidence" value="ECO:0007669"/>
    <property type="project" value="UniProtKB-UniRule"/>
</dbReference>
<dbReference type="CDD" id="cd00003">
    <property type="entry name" value="PNPsynthase"/>
    <property type="match status" value="1"/>
</dbReference>
<dbReference type="Gene3D" id="3.20.20.70">
    <property type="entry name" value="Aldolase class I"/>
    <property type="match status" value="1"/>
</dbReference>
<dbReference type="HAMAP" id="MF_00279">
    <property type="entry name" value="PdxJ"/>
    <property type="match status" value="1"/>
</dbReference>
<dbReference type="InterPro" id="IPR013785">
    <property type="entry name" value="Aldolase_TIM"/>
</dbReference>
<dbReference type="InterPro" id="IPR004569">
    <property type="entry name" value="PyrdxlP_synth_PdxJ"/>
</dbReference>
<dbReference type="InterPro" id="IPR036130">
    <property type="entry name" value="Pyridoxine-5'_phos_synth"/>
</dbReference>
<dbReference type="NCBIfam" id="TIGR00559">
    <property type="entry name" value="pdxJ"/>
    <property type="match status" value="1"/>
</dbReference>
<dbReference type="NCBIfam" id="NF003626">
    <property type="entry name" value="PRK05265.1-4"/>
    <property type="match status" value="1"/>
</dbReference>
<dbReference type="PANTHER" id="PTHR30456">
    <property type="entry name" value="PYRIDOXINE 5'-PHOSPHATE SYNTHASE"/>
    <property type="match status" value="1"/>
</dbReference>
<dbReference type="PANTHER" id="PTHR30456:SF0">
    <property type="entry name" value="PYRIDOXINE 5'-PHOSPHATE SYNTHASE"/>
    <property type="match status" value="1"/>
</dbReference>
<dbReference type="Pfam" id="PF03740">
    <property type="entry name" value="PdxJ"/>
    <property type="match status" value="1"/>
</dbReference>
<dbReference type="SUPFAM" id="SSF63892">
    <property type="entry name" value="Pyridoxine 5'-phosphate synthase"/>
    <property type="match status" value="1"/>
</dbReference>
<gene>
    <name evidence="1" type="primary">pdxJ</name>
    <name type="ordered locus">Xfasm12_0046</name>
</gene>
<name>PDXJ_XYLFM</name>
<evidence type="ECO:0000255" key="1">
    <source>
        <dbReference type="HAMAP-Rule" id="MF_00279"/>
    </source>
</evidence>